<evidence type="ECO:0000255" key="1">
    <source>
        <dbReference type="HAMAP-Rule" id="MF_00417"/>
    </source>
</evidence>
<accession>Q838N8</accession>
<comment type="function">
    <text evidence="1">Removes 5-oxoproline from various penultimate amino acid residues except L-proline.</text>
</comment>
<comment type="catalytic activity">
    <reaction evidence="1">
        <text>Release of an N-terminal pyroglutamyl group from a polypeptide, the second amino acid generally not being Pro.</text>
        <dbReference type="EC" id="3.4.19.3"/>
    </reaction>
</comment>
<comment type="subunit">
    <text evidence="1">Homotetramer.</text>
</comment>
<comment type="subcellular location">
    <subcellularLocation>
        <location evidence="1">Cytoplasm</location>
    </subcellularLocation>
</comment>
<comment type="similarity">
    <text evidence="1">Belongs to the peptidase C15 family.</text>
</comment>
<organism>
    <name type="scientific">Enterococcus faecalis (strain ATCC 700802 / V583)</name>
    <dbReference type="NCBI Taxonomy" id="226185"/>
    <lineage>
        <taxon>Bacteria</taxon>
        <taxon>Bacillati</taxon>
        <taxon>Bacillota</taxon>
        <taxon>Bacilli</taxon>
        <taxon>Lactobacillales</taxon>
        <taxon>Enterococcaceae</taxon>
        <taxon>Enterococcus</taxon>
    </lineage>
</organism>
<protein>
    <recommendedName>
        <fullName evidence="1">Pyrrolidone-carboxylate peptidase</fullName>
        <ecNumber evidence="1">3.4.19.3</ecNumber>
    </recommendedName>
    <alternativeName>
        <fullName evidence="1">5-oxoprolyl-peptidase</fullName>
    </alternativeName>
    <alternativeName>
        <fullName evidence="1">Pyroglutamyl-peptidase I</fullName>
        <shortName evidence="1">PGP-I</shortName>
        <shortName evidence="1">Pyrase</shortName>
    </alternativeName>
</protein>
<proteinExistence type="inferred from homology"/>
<reference key="1">
    <citation type="journal article" date="2003" name="Science">
        <title>Role of mobile DNA in the evolution of vancomycin-resistant Enterococcus faecalis.</title>
        <authorList>
            <person name="Paulsen I.T."/>
            <person name="Banerjei L."/>
            <person name="Myers G.S.A."/>
            <person name="Nelson K.E."/>
            <person name="Seshadri R."/>
            <person name="Read T.D."/>
            <person name="Fouts D.E."/>
            <person name="Eisen J.A."/>
            <person name="Gill S.R."/>
            <person name="Heidelberg J.F."/>
            <person name="Tettelin H."/>
            <person name="Dodson R.J."/>
            <person name="Umayam L.A."/>
            <person name="Brinkac L.M."/>
            <person name="Beanan M.J."/>
            <person name="Daugherty S.C."/>
            <person name="DeBoy R.T."/>
            <person name="Durkin S.A."/>
            <person name="Kolonay J.F."/>
            <person name="Madupu R."/>
            <person name="Nelson W.C."/>
            <person name="Vamathevan J.J."/>
            <person name="Tran B."/>
            <person name="Upton J."/>
            <person name="Hansen T."/>
            <person name="Shetty J."/>
            <person name="Khouri H.M."/>
            <person name="Utterback T.R."/>
            <person name="Radune D."/>
            <person name="Ketchum K.A."/>
            <person name="Dougherty B.A."/>
            <person name="Fraser C.M."/>
        </authorList>
    </citation>
    <scope>NUCLEOTIDE SEQUENCE [LARGE SCALE GENOMIC DNA]</scope>
    <source>
        <strain>ATCC 700802 / V583</strain>
    </source>
</reference>
<sequence length="213" mass="22937">MKVVVTGFDPFGGEAINPAFEAVKKLPAEIAGAEIIKVEVPTVFGTSGEKVAEAIETHQPDMVICVGQAGGRETVTVEKVAINLAEARIPDNAGQQPSDVPLVEDGATAYFTNLPIKAMVKNCHDHQLPAAISYTAGTFVCNDIMYHLLHLINTKYPTIRGGFIHVPFLPEQTIDKPTFASMSLEAITDSLFYMIEAAVKTQEDIQLQGGTTH</sequence>
<feature type="chain" id="PRO_0000184717" description="Pyrrolidone-carboxylate peptidase">
    <location>
        <begin position="1"/>
        <end position="213"/>
    </location>
</feature>
<feature type="active site" evidence="1">
    <location>
        <position position="78"/>
    </location>
</feature>
<feature type="active site" evidence="1">
    <location>
        <position position="141"/>
    </location>
</feature>
<feature type="active site" evidence="1">
    <location>
        <position position="165"/>
    </location>
</feature>
<gene>
    <name evidence="1" type="primary">pcp</name>
    <name type="ordered locus">EF_0401</name>
</gene>
<keyword id="KW-0963">Cytoplasm</keyword>
<keyword id="KW-0378">Hydrolase</keyword>
<keyword id="KW-0645">Protease</keyword>
<keyword id="KW-1185">Reference proteome</keyword>
<keyword id="KW-0788">Thiol protease</keyword>
<name>PCP_ENTFA</name>
<dbReference type="EC" id="3.4.19.3" evidence="1"/>
<dbReference type="EMBL" id="AE016830">
    <property type="protein sequence ID" value="AAO80261.1"/>
    <property type="molecule type" value="Genomic_DNA"/>
</dbReference>
<dbReference type="RefSeq" id="NP_814190.1">
    <property type="nucleotide sequence ID" value="NC_004668.1"/>
</dbReference>
<dbReference type="RefSeq" id="WP_002379057.1">
    <property type="nucleotide sequence ID" value="NZ_KE136524.1"/>
</dbReference>
<dbReference type="SMR" id="Q838N8"/>
<dbReference type="STRING" id="226185.EF_0401"/>
<dbReference type="MEROPS" id="C15.001"/>
<dbReference type="EnsemblBacteria" id="AAO80261">
    <property type="protein sequence ID" value="AAO80261"/>
    <property type="gene ID" value="EF_0401"/>
</dbReference>
<dbReference type="KEGG" id="efa:EF0401"/>
<dbReference type="PATRIC" id="fig|226185.45.peg.2930"/>
<dbReference type="eggNOG" id="COG2039">
    <property type="taxonomic scope" value="Bacteria"/>
</dbReference>
<dbReference type="HOGENOM" id="CLU_043960_4_0_9"/>
<dbReference type="Proteomes" id="UP000001415">
    <property type="component" value="Chromosome"/>
</dbReference>
<dbReference type="GO" id="GO:0005829">
    <property type="term" value="C:cytosol"/>
    <property type="evidence" value="ECO:0007669"/>
    <property type="project" value="InterPro"/>
</dbReference>
<dbReference type="GO" id="GO:0016920">
    <property type="term" value="F:pyroglutamyl-peptidase activity"/>
    <property type="evidence" value="ECO:0007669"/>
    <property type="project" value="UniProtKB-UniRule"/>
</dbReference>
<dbReference type="GO" id="GO:0006508">
    <property type="term" value="P:proteolysis"/>
    <property type="evidence" value="ECO:0007669"/>
    <property type="project" value="UniProtKB-KW"/>
</dbReference>
<dbReference type="CDD" id="cd00501">
    <property type="entry name" value="Peptidase_C15"/>
    <property type="match status" value="1"/>
</dbReference>
<dbReference type="FunFam" id="3.40.630.20:FF:000001">
    <property type="entry name" value="Pyrrolidone-carboxylate peptidase"/>
    <property type="match status" value="1"/>
</dbReference>
<dbReference type="Gene3D" id="3.40.630.20">
    <property type="entry name" value="Peptidase C15, pyroglutamyl peptidase I-like"/>
    <property type="match status" value="1"/>
</dbReference>
<dbReference type="HAMAP" id="MF_00417">
    <property type="entry name" value="Pyrrolid_peptidase"/>
    <property type="match status" value="1"/>
</dbReference>
<dbReference type="InterPro" id="IPR000816">
    <property type="entry name" value="Peptidase_C15"/>
</dbReference>
<dbReference type="InterPro" id="IPR016125">
    <property type="entry name" value="Peptidase_C15-like"/>
</dbReference>
<dbReference type="InterPro" id="IPR036440">
    <property type="entry name" value="Peptidase_C15-like_sf"/>
</dbReference>
<dbReference type="InterPro" id="IPR029762">
    <property type="entry name" value="PGP-I_bact-type"/>
</dbReference>
<dbReference type="InterPro" id="IPR033694">
    <property type="entry name" value="PGPEP1_Cys_AS"/>
</dbReference>
<dbReference type="InterPro" id="IPR033693">
    <property type="entry name" value="PGPEP1_Glu_AS"/>
</dbReference>
<dbReference type="NCBIfam" id="NF009676">
    <property type="entry name" value="PRK13197.1"/>
    <property type="match status" value="1"/>
</dbReference>
<dbReference type="NCBIfam" id="TIGR00504">
    <property type="entry name" value="pyro_pdase"/>
    <property type="match status" value="1"/>
</dbReference>
<dbReference type="PANTHER" id="PTHR23402">
    <property type="entry name" value="PROTEASE FAMILY C15 PYROGLUTAMYL-PEPTIDASE I-RELATED"/>
    <property type="match status" value="1"/>
</dbReference>
<dbReference type="PANTHER" id="PTHR23402:SF1">
    <property type="entry name" value="PYROGLUTAMYL-PEPTIDASE I"/>
    <property type="match status" value="1"/>
</dbReference>
<dbReference type="Pfam" id="PF01470">
    <property type="entry name" value="Peptidase_C15"/>
    <property type="match status" value="1"/>
</dbReference>
<dbReference type="PIRSF" id="PIRSF015592">
    <property type="entry name" value="Prld-crbxl_pptds"/>
    <property type="match status" value="1"/>
</dbReference>
<dbReference type="PRINTS" id="PR00706">
    <property type="entry name" value="PYROGLUPTASE"/>
</dbReference>
<dbReference type="SUPFAM" id="SSF53182">
    <property type="entry name" value="Pyrrolidone carboxyl peptidase (pyroglutamate aminopeptidase)"/>
    <property type="match status" value="1"/>
</dbReference>
<dbReference type="PROSITE" id="PS01334">
    <property type="entry name" value="PYRASE_CYS"/>
    <property type="match status" value="1"/>
</dbReference>
<dbReference type="PROSITE" id="PS01333">
    <property type="entry name" value="PYRASE_GLU"/>
    <property type="match status" value="1"/>
</dbReference>